<sequence>MSNIPSELKYASSHEWVRNEGDGTFTVGITEHAQELLGDMVFVELPEVGDEVDAGEECAVAESVKAASDIYAPIGGEIVAINEELEDAPETVNTDAFGDGWLFRIKASDESELENLLNAEDYANTIDED</sequence>
<organism>
    <name type="scientific">Pseudoalteromonas translucida (strain TAC 125)</name>
    <dbReference type="NCBI Taxonomy" id="326442"/>
    <lineage>
        <taxon>Bacteria</taxon>
        <taxon>Pseudomonadati</taxon>
        <taxon>Pseudomonadota</taxon>
        <taxon>Gammaproteobacteria</taxon>
        <taxon>Alteromonadales</taxon>
        <taxon>Pseudoalteromonadaceae</taxon>
        <taxon>Pseudoalteromonas</taxon>
    </lineage>
</organism>
<name>GCSH_PSET1</name>
<feature type="chain" id="PRO_0000302420" description="Glycine cleavage system H protein">
    <location>
        <begin position="1"/>
        <end position="129"/>
    </location>
</feature>
<feature type="domain" description="Lipoyl-binding" evidence="2">
    <location>
        <begin position="24"/>
        <end position="106"/>
    </location>
</feature>
<feature type="modified residue" description="N6-lipoyllysine" evidence="1">
    <location>
        <position position="65"/>
    </location>
</feature>
<comment type="function">
    <text evidence="1">The glycine cleavage system catalyzes the degradation of glycine. The H protein shuttles the methylamine group of glycine from the P protein to the T protein.</text>
</comment>
<comment type="cofactor">
    <cofactor evidence="1">
        <name>(R)-lipoate</name>
        <dbReference type="ChEBI" id="CHEBI:83088"/>
    </cofactor>
    <text evidence="1">Binds 1 lipoyl cofactor covalently.</text>
</comment>
<comment type="subunit">
    <text evidence="1">The glycine cleavage system is composed of four proteins: P, T, L and H.</text>
</comment>
<comment type="similarity">
    <text evidence="1">Belongs to the GcvH family.</text>
</comment>
<accession>Q3IFW0</accession>
<evidence type="ECO:0000255" key="1">
    <source>
        <dbReference type="HAMAP-Rule" id="MF_00272"/>
    </source>
</evidence>
<evidence type="ECO:0000255" key="2">
    <source>
        <dbReference type="PROSITE-ProRule" id="PRU01066"/>
    </source>
</evidence>
<dbReference type="EMBL" id="CR954246">
    <property type="protein sequence ID" value="CAI87522.1"/>
    <property type="molecule type" value="Genomic_DNA"/>
</dbReference>
<dbReference type="SMR" id="Q3IFW0"/>
<dbReference type="STRING" id="326442.PSHAa2474"/>
<dbReference type="KEGG" id="pha:PSHAa2474"/>
<dbReference type="eggNOG" id="COG0509">
    <property type="taxonomic scope" value="Bacteria"/>
</dbReference>
<dbReference type="HOGENOM" id="CLU_097408_2_1_6"/>
<dbReference type="BioCyc" id="PHAL326442:PSHA_RS12180-MONOMER"/>
<dbReference type="Proteomes" id="UP000006843">
    <property type="component" value="Chromosome I"/>
</dbReference>
<dbReference type="GO" id="GO:0005829">
    <property type="term" value="C:cytosol"/>
    <property type="evidence" value="ECO:0007669"/>
    <property type="project" value="TreeGrafter"/>
</dbReference>
<dbReference type="GO" id="GO:0005960">
    <property type="term" value="C:glycine cleavage complex"/>
    <property type="evidence" value="ECO:0007669"/>
    <property type="project" value="InterPro"/>
</dbReference>
<dbReference type="GO" id="GO:0019464">
    <property type="term" value="P:glycine decarboxylation via glycine cleavage system"/>
    <property type="evidence" value="ECO:0007669"/>
    <property type="project" value="UniProtKB-UniRule"/>
</dbReference>
<dbReference type="CDD" id="cd06848">
    <property type="entry name" value="GCS_H"/>
    <property type="match status" value="1"/>
</dbReference>
<dbReference type="FunFam" id="2.40.50.100:FF:000011">
    <property type="entry name" value="Glycine cleavage system H protein"/>
    <property type="match status" value="1"/>
</dbReference>
<dbReference type="Gene3D" id="2.40.50.100">
    <property type="match status" value="1"/>
</dbReference>
<dbReference type="HAMAP" id="MF_00272">
    <property type="entry name" value="GcvH"/>
    <property type="match status" value="1"/>
</dbReference>
<dbReference type="InterPro" id="IPR003016">
    <property type="entry name" value="2-oxoA_DH_lipoyl-BS"/>
</dbReference>
<dbReference type="InterPro" id="IPR000089">
    <property type="entry name" value="Biotin_lipoyl"/>
</dbReference>
<dbReference type="InterPro" id="IPR002930">
    <property type="entry name" value="GCV_H"/>
</dbReference>
<dbReference type="InterPro" id="IPR033753">
    <property type="entry name" value="GCV_H/Fam206"/>
</dbReference>
<dbReference type="InterPro" id="IPR017453">
    <property type="entry name" value="GCV_H_sub"/>
</dbReference>
<dbReference type="InterPro" id="IPR011053">
    <property type="entry name" value="Single_hybrid_motif"/>
</dbReference>
<dbReference type="NCBIfam" id="TIGR00527">
    <property type="entry name" value="gcvH"/>
    <property type="match status" value="1"/>
</dbReference>
<dbReference type="NCBIfam" id="NF002270">
    <property type="entry name" value="PRK01202.1"/>
    <property type="match status" value="1"/>
</dbReference>
<dbReference type="PANTHER" id="PTHR11715">
    <property type="entry name" value="GLYCINE CLEAVAGE SYSTEM H PROTEIN"/>
    <property type="match status" value="1"/>
</dbReference>
<dbReference type="PANTHER" id="PTHR11715:SF3">
    <property type="entry name" value="GLYCINE CLEAVAGE SYSTEM H PROTEIN-RELATED"/>
    <property type="match status" value="1"/>
</dbReference>
<dbReference type="Pfam" id="PF01597">
    <property type="entry name" value="GCV_H"/>
    <property type="match status" value="1"/>
</dbReference>
<dbReference type="SUPFAM" id="SSF51230">
    <property type="entry name" value="Single hybrid motif"/>
    <property type="match status" value="1"/>
</dbReference>
<dbReference type="PROSITE" id="PS50968">
    <property type="entry name" value="BIOTINYL_LIPOYL"/>
    <property type="match status" value="1"/>
</dbReference>
<dbReference type="PROSITE" id="PS00189">
    <property type="entry name" value="LIPOYL"/>
    <property type="match status" value="1"/>
</dbReference>
<proteinExistence type="inferred from homology"/>
<protein>
    <recommendedName>
        <fullName evidence="1">Glycine cleavage system H protein</fullName>
    </recommendedName>
</protein>
<keyword id="KW-0450">Lipoyl</keyword>
<keyword id="KW-1185">Reference proteome</keyword>
<gene>
    <name evidence="1" type="primary">gcvH</name>
    <name type="ordered locus">PSHAa2474</name>
</gene>
<reference key="1">
    <citation type="journal article" date="2005" name="Genome Res.">
        <title>Coping with cold: the genome of the versatile marine Antarctica bacterium Pseudoalteromonas haloplanktis TAC125.</title>
        <authorList>
            <person name="Medigue C."/>
            <person name="Krin E."/>
            <person name="Pascal G."/>
            <person name="Barbe V."/>
            <person name="Bernsel A."/>
            <person name="Bertin P.N."/>
            <person name="Cheung F."/>
            <person name="Cruveiller S."/>
            <person name="D'Amico S."/>
            <person name="Duilio A."/>
            <person name="Fang G."/>
            <person name="Feller G."/>
            <person name="Ho C."/>
            <person name="Mangenot S."/>
            <person name="Marino G."/>
            <person name="Nilsson J."/>
            <person name="Parrilli E."/>
            <person name="Rocha E.P.C."/>
            <person name="Rouy Z."/>
            <person name="Sekowska A."/>
            <person name="Tutino M.L."/>
            <person name="Vallenet D."/>
            <person name="von Heijne G."/>
            <person name="Danchin A."/>
        </authorList>
    </citation>
    <scope>NUCLEOTIDE SEQUENCE [LARGE SCALE GENOMIC DNA]</scope>
    <source>
        <strain>TAC 125</strain>
    </source>
</reference>